<organism>
    <name type="scientific">Conus regius</name>
    <name type="common">Crown cone</name>
    <dbReference type="NCBI Taxonomy" id="101314"/>
    <lineage>
        <taxon>Eukaryota</taxon>
        <taxon>Metazoa</taxon>
        <taxon>Spiralia</taxon>
        <taxon>Lophotrochozoa</taxon>
        <taxon>Mollusca</taxon>
        <taxon>Gastropoda</taxon>
        <taxon>Caenogastropoda</taxon>
        <taxon>Neogastropoda</taxon>
        <taxon>Conoidea</taxon>
        <taxon>Conidae</taxon>
        <taxon>Conus</taxon>
        <taxon>Stephanoconus</taxon>
    </lineage>
</organism>
<name>CA1F_CONRE</name>
<feature type="peptide" id="PRO_0000259388" description="Alpha-conotoxin-like Reg1f" evidence="3">
    <location>
        <begin position="1"/>
        <end position="13"/>
    </location>
</feature>
<feature type="modified residue" description="4-hydroxyproline" evidence="3">
    <location>
        <position position="7"/>
    </location>
</feature>
<feature type="modified residue" description="4-hydroxyproline" evidence="3">
    <location>
        <position position="8"/>
    </location>
</feature>
<feature type="modified residue" description="Cysteine amide" evidence="3">
    <location>
        <position position="13"/>
    </location>
</feature>
<feature type="disulfide bond" evidence="1">
    <location>
        <begin position="3"/>
        <end position="9"/>
    </location>
</feature>
<feature type="disulfide bond" evidence="1">
    <location>
        <begin position="4"/>
        <end position="13"/>
    </location>
</feature>
<reference key="1">
    <citation type="journal article" date="2006" name="Prog. Mol. Subcell. Biol.">
        <title>Hyperhydroxylation: a new strategy for neuronal targeting by venomous marine molluscs.</title>
        <authorList>
            <person name="Franco A."/>
            <person name="Pisarewicz K."/>
            <person name="Moller C."/>
            <person name="Mora D."/>
            <person name="Fields G.B."/>
            <person name="Mari F."/>
        </authorList>
    </citation>
    <scope>PROTEIN SEQUENCE</scope>
    <scope>SUBCELLULAR LOCATION</scope>
    <scope>TISSUE SPECIFICITY</scope>
    <scope>HYDROXYLATION AT PRO-7 AND PRO-8</scope>
    <scope>AMIDATION AT CYS-13</scope>
    <source>
        <tissue>Venom</tissue>
    </source>
</reference>
<sequence>DYCCRRPPCTLIC</sequence>
<evidence type="ECO:0000250" key="1">
    <source>
        <dbReference type="UniProtKB" id="P0C1D0"/>
    </source>
</evidence>
<evidence type="ECO:0000250" key="2">
    <source>
        <dbReference type="UniProtKB" id="P50983"/>
    </source>
</evidence>
<evidence type="ECO:0000269" key="3">
    <source>
    </source>
</evidence>
<evidence type="ECO:0000303" key="4">
    <source>
    </source>
</evidence>
<evidence type="ECO:0000305" key="5"/>
<accession>P85012</accession>
<protein>
    <recommendedName>
        <fullName evidence="4">Alpha-conotoxin-like Reg1f</fullName>
    </recommendedName>
</protein>
<keyword id="KW-0008">Acetylcholine receptor inhibiting toxin</keyword>
<keyword id="KW-0027">Amidation</keyword>
<keyword id="KW-0903">Direct protein sequencing</keyword>
<keyword id="KW-1015">Disulfide bond</keyword>
<keyword id="KW-0379">Hydroxylation</keyword>
<keyword id="KW-0872">Ion channel impairing toxin</keyword>
<keyword id="KW-0528">Neurotoxin</keyword>
<keyword id="KW-0629">Postsynaptic neurotoxin</keyword>
<keyword id="KW-0964">Secreted</keyword>
<keyword id="KW-0800">Toxin</keyword>
<proteinExistence type="evidence at protein level"/>
<dbReference type="ConoServer" id="31">
    <property type="toxin name" value="Reg1f"/>
</dbReference>
<dbReference type="GO" id="GO:0005576">
    <property type="term" value="C:extracellular region"/>
    <property type="evidence" value="ECO:0007669"/>
    <property type="project" value="UniProtKB-SubCell"/>
</dbReference>
<dbReference type="GO" id="GO:0035792">
    <property type="term" value="C:host cell postsynaptic membrane"/>
    <property type="evidence" value="ECO:0007669"/>
    <property type="project" value="UniProtKB-KW"/>
</dbReference>
<dbReference type="GO" id="GO:0030550">
    <property type="term" value="F:acetylcholine receptor inhibitor activity"/>
    <property type="evidence" value="ECO:0007669"/>
    <property type="project" value="UniProtKB-KW"/>
</dbReference>
<dbReference type="GO" id="GO:0099106">
    <property type="term" value="F:ion channel regulator activity"/>
    <property type="evidence" value="ECO:0007669"/>
    <property type="project" value="UniProtKB-KW"/>
</dbReference>
<dbReference type="GO" id="GO:0090729">
    <property type="term" value="F:toxin activity"/>
    <property type="evidence" value="ECO:0007669"/>
    <property type="project" value="UniProtKB-KW"/>
</dbReference>
<comment type="function">
    <text evidence="2">Alpha-conotoxins act on postsynaptic membranes, they bind to the nicotinic acetylcholine receptors (nAChR) and thus inhibit them.</text>
</comment>
<comment type="subcellular location">
    <subcellularLocation>
        <location evidence="3">Secreted</location>
    </subcellularLocation>
</comment>
<comment type="tissue specificity">
    <text evidence="3">Expressed by the venom duct.</text>
</comment>
<comment type="domain">
    <text evidence="5">The cysteine framework is I (CC-C-C). Alpha4/3 pattern.</text>
</comment>
<comment type="similarity">
    <text evidence="5">Belongs to the conotoxin A superfamily.</text>
</comment>